<name>DPOL_HBVG2</name>
<comment type="function">
    <text evidence="1">Multifunctional enzyme that converts the viral RNA genome into dsDNA in viral cytoplasmic capsids. This enzyme displays a DNA polymerase activity that can copy either DNA or RNA templates, and a ribonuclease H (RNase H) activity that cleaves the RNA strand of RNA-DNA heteroduplexes in a partially processive 3'- to 5'-endonucleasic mode. Neo-synthesized pregenomic RNA (pgRNA) are encapsidated together with the P protein, and reverse-transcribed inside the nucleocapsid. Initiation of reverse-transcription occurs first by binding the epsilon loop on the pgRNA genome, and is initiated by protein priming, thereby the 5'-end of (-)DNA is covalently linked to P protein. Partial (+)DNA is synthesized from the (-)DNA template and generates the relaxed circular DNA (RC-DNA) genome. After budding and infection, the RC-DNA migrates in the nucleus, and is converted into a plasmid-like covalently closed circular DNA (cccDNA). The activity of P protein does not seem to be necessary for cccDNA generation, and is presumably released from (+)DNA by host nuclear DNA repair machinery.</text>
</comment>
<comment type="catalytic activity">
    <reaction evidence="1">
        <text>DNA(n) + a 2'-deoxyribonucleoside 5'-triphosphate = DNA(n+1) + diphosphate</text>
        <dbReference type="Rhea" id="RHEA:22508"/>
        <dbReference type="Rhea" id="RHEA-COMP:17339"/>
        <dbReference type="Rhea" id="RHEA-COMP:17340"/>
        <dbReference type="ChEBI" id="CHEBI:33019"/>
        <dbReference type="ChEBI" id="CHEBI:61560"/>
        <dbReference type="ChEBI" id="CHEBI:173112"/>
        <dbReference type="EC" id="2.7.7.7"/>
    </reaction>
</comment>
<comment type="catalytic activity">
    <reaction evidence="1">
        <text>DNA(n) + a 2'-deoxyribonucleoside 5'-triphosphate = DNA(n+1) + diphosphate</text>
        <dbReference type="Rhea" id="RHEA:22508"/>
        <dbReference type="Rhea" id="RHEA-COMP:17339"/>
        <dbReference type="Rhea" id="RHEA-COMP:17340"/>
        <dbReference type="ChEBI" id="CHEBI:33019"/>
        <dbReference type="ChEBI" id="CHEBI:61560"/>
        <dbReference type="ChEBI" id="CHEBI:173112"/>
        <dbReference type="EC" id="2.7.7.49"/>
    </reaction>
</comment>
<comment type="catalytic activity">
    <reaction evidence="1">
        <text>Endonucleolytic cleavage to 5'-phosphomonoester.</text>
        <dbReference type="EC" id="3.1.26.4"/>
    </reaction>
</comment>
<comment type="activity regulation">
    <text evidence="1">Activated by host HSP70 and HSP40 in vitro to be able to bind the epsilon loop of the pgRNA. Because deletion of the RNase H region renders the protein partly chaperone-independent, the chaperones may be needed indirectly to relieve occlusion of the RNA-binding site by this domain. Inhibited by several reverse-transcriptase inhibitors: Lamivudine, Adefovir and Entecavir.</text>
</comment>
<comment type="domain">
    <text evidence="1">Terminal protein domain (TP) is hepadnavirus-specific. Spacer domain is highly variable and separates the TP and RT domains. Polymerase/reverse-transcriptase domain (RT) and ribonuclease H domain (RH) are similar to retrovirus reverse transcriptase/RNase H.</text>
</comment>
<comment type="domain">
    <text evidence="1">The polymerase/reverse transcriptase (RT) and ribonuclease H (RH) domains are structured in five subdomains: finger, palm, thumb, connection and RNase H. Within the palm subdomain, the 'primer grip' region is thought to be involved in the positioning of the primer terminus for accommodating the incoming nucleotide. The RH domain stabilizes the association of RT with primer-template.</text>
</comment>
<comment type="miscellaneous">
    <text evidence="1">Hepadnaviral virions contain probably just one P protein molecule per particle.</text>
</comment>
<comment type="similarity">
    <text evidence="1">Belongs to the hepadnaviridae P protein family.</text>
</comment>
<organism>
    <name type="scientific">Hepatitis B virus genotype G (isolate United States/USG17/2002)</name>
    <name type="common">HBV-G</name>
    <dbReference type="NCBI Taxonomy" id="489537"/>
    <lineage>
        <taxon>Viruses</taxon>
        <taxon>Riboviria</taxon>
        <taxon>Pararnavirae</taxon>
        <taxon>Artverviricota</taxon>
        <taxon>Revtraviricetes</taxon>
        <taxon>Blubervirales</taxon>
        <taxon>Hepadnaviridae</taxon>
        <taxon>Orthohepadnavirus</taxon>
        <taxon>Hepatitis B virus</taxon>
        <taxon>hepatitis B virus genotype G</taxon>
    </lineage>
</organism>
<keyword id="KW-0235">DNA replication</keyword>
<keyword id="KW-0238">DNA-binding</keyword>
<keyword id="KW-0239">DNA-directed DNA polymerase</keyword>
<keyword id="KW-0255">Endonuclease</keyword>
<keyword id="KW-0945">Host-virus interaction</keyword>
<keyword id="KW-0378">Hydrolase</keyword>
<keyword id="KW-1090">Inhibition of host innate immune response by virus</keyword>
<keyword id="KW-1113">Inhibition of host RLR pathway by virus</keyword>
<keyword id="KW-0460">Magnesium</keyword>
<keyword id="KW-0479">Metal-binding</keyword>
<keyword id="KW-0511">Multifunctional enzyme</keyword>
<keyword id="KW-0540">Nuclease</keyword>
<keyword id="KW-0548">Nucleotidyltransferase</keyword>
<keyword id="KW-0695">RNA-directed DNA polymerase</keyword>
<keyword id="KW-0808">Transferase</keyword>
<keyword id="KW-0899">Viral immunoevasion</keyword>
<proteinExistence type="inferred from homology"/>
<protein>
    <recommendedName>
        <fullName evidence="1">Protein P</fullName>
    </recommendedName>
    <domain>
        <recommendedName>
            <fullName evidence="1">DNA-directed DNA polymerase</fullName>
            <ecNumber evidence="1">2.7.7.7</ecNumber>
        </recommendedName>
    </domain>
    <domain>
        <recommendedName>
            <fullName evidence="1">RNA-directed DNA polymerase</fullName>
            <ecNumber evidence="1">2.7.7.49</ecNumber>
        </recommendedName>
    </domain>
    <domain>
        <recommendedName>
            <fullName evidence="1">Ribonuclease H</fullName>
            <ecNumber evidence="1">3.1.26.4</ecNumber>
        </recommendedName>
    </domain>
</protein>
<reference key="1">
    <citation type="journal article" date="2001" name="J. Virol. Methods">
        <title>Determination of hepatitis B virus genotype G by polymerase chain reaction with hemi-nested primers.</title>
        <authorList>
            <person name="Kato H."/>
            <person name="Orito E."/>
            <person name="Sugauchi F."/>
            <person name="Ueda R."/>
            <person name="Gish R.G."/>
            <person name="Usuda S."/>
            <person name="Miyakawa Y."/>
            <person name="Mizokami M."/>
        </authorList>
    </citation>
    <scope>NUCLEOTIDE SEQUENCE [GENOMIC DNA]</scope>
</reference>
<reference key="2">
    <citation type="journal article" date="2007" name="World J. Gastroenterol.">
        <title>Hepatitis B virus replication.</title>
        <authorList>
            <person name="Beck J."/>
            <person name="Nassal M."/>
        </authorList>
    </citation>
    <scope>REVIEW</scope>
</reference>
<accession>Q8QZQ2</accession>
<dbReference type="EC" id="2.7.7.7" evidence="1"/>
<dbReference type="EC" id="2.7.7.49" evidence="1"/>
<dbReference type="EC" id="3.1.26.4" evidence="1"/>
<dbReference type="EMBL" id="AB056513">
    <property type="protein sequence ID" value="BAB64319.1"/>
    <property type="molecule type" value="Genomic_DNA"/>
</dbReference>
<dbReference type="Proteomes" id="UP000008537">
    <property type="component" value="Genome"/>
</dbReference>
<dbReference type="GO" id="GO:0003677">
    <property type="term" value="F:DNA binding"/>
    <property type="evidence" value="ECO:0007669"/>
    <property type="project" value="UniProtKB-UniRule"/>
</dbReference>
<dbReference type="GO" id="GO:0003887">
    <property type="term" value="F:DNA-directed DNA polymerase activity"/>
    <property type="evidence" value="ECO:0007669"/>
    <property type="project" value="UniProtKB-UniRule"/>
</dbReference>
<dbReference type="GO" id="GO:0046872">
    <property type="term" value="F:metal ion binding"/>
    <property type="evidence" value="ECO:0007669"/>
    <property type="project" value="UniProtKB-UniRule"/>
</dbReference>
<dbReference type="GO" id="GO:0003964">
    <property type="term" value="F:RNA-directed DNA polymerase activity"/>
    <property type="evidence" value="ECO:0007669"/>
    <property type="project" value="UniProtKB-UniRule"/>
</dbReference>
<dbReference type="GO" id="GO:0004523">
    <property type="term" value="F:RNA-DNA hybrid ribonuclease activity"/>
    <property type="evidence" value="ECO:0007669"/>
    <property type="project" value="UniProtKB-UniRule"/>
</dbReference>
<dbReference type="GO" id="GO:0006260">
    <property type="term" value="P:DNA replication"/>
    <property type="evidence" value="ECO:0007669"/>
    <property type="project" value="UniProtKB-UniRule"/>
</dbReference>
<dbReference type="GO" id="GO:0052170">
    <property type="term" value="P:symbiont-mediated suppression of host innate immune response"/>
    <property type="evidence" value="ECO:0007669"/>
    <property type="project" value="UniProtKB-UniRule"/>
</dbReference>
<dbReference type="FunFam" id="3.30.70.270:FF:000009">
    <property type="entry name" value="Protein P"/>
    <property type="match status" value="1"/>
</dbReference>
<dbReference type="Gene3D" id="3.30.70.270">
    <property type="match status" value="1"/>
</dbReference>
<dbReference type="HAMAP" id="MF_04073">
    <property type="entry name" value="HBV_DPOL"/>
    <property type="match status" value="1"/>
</dbReference>
<dbReference type="InterPro" id="IPR043502">
    <property type="entry name" value="DNA/RNA_pol_sf"/>
</dbReference>
<dbReference type="InterPro" id="IPR001462">
    <property type="entry name" value="DNApol_viral_C"/>
</dbReference>
<dbReference type="InterPro" id="IPR000201">
    <property type="entry name" value="DNApol_viral_N"/>
</dbReference>
<dbReference type="InterPro" id="IPR037531">
    <property type="entry name" value="HBV_DPOL"/>
</dbReference>
<dbReference type="InterPro" id="IPR043128">
    <property type="entry name" value="Rev_trsase/Diguanyl_cyclase"/>
</dbReference>
<dbReference type="InterPro" id="IPR000477">
    <property type="entry name" value="RT_dom"/>
</dbReference>
<dbReference type="InterPro" id="IPR051320">
    <property type="entry name" value="Viral_Replic_Matur_Polypro"/>
</dbReference>
<dbReference type="PANTHER" id="PTHR33064">
    <property type="entry name" value="POL PROTEIN"/>
    <property type="match status" value="1"/>
</dbReference>
<dbReference type="PANTHER" id="PTHR33064:SF37">
    <property type="entry name" value="RIBONUCLEASE H"/>
    <property type="match status" value="1"/>
</dbReference>
<dbReference type="Pfam" id="PF00336">
    <property type="entry name" value="DNA_pol_viral_C"/>
    <property type="match status" value="1"/>
</dbReference>
<dbReference type="Pfam" id="PF00242">
    <property type="entry name" value="DNA_pol_viral_N"/>
    <property type="match status" value="1"/>
</dbReference>
<dbReference type="Pfam" id="PF00078">
    <property type="entry name" value="RVT_1"/>
    <property type="match status" value="1"/>
</dbReference>
<dbReference type="SUPFAM" id="SSF56672">
    <property type="entry name" value="DNA/RNA polymerases"/>
    <property type="match status" value="1"/>
</dbReference>
<dbReference type="PROSITE" id="PS50878">
    <property type="entry name" value="RT_POL"/>
    <property type="match status" value="1"/>
</dbReference>
<sequence length="842" mass="94717">MPLSYQHFRRLLLLDEEAGPLEEELPRLADEDLNRRVAEDLHLQLPNVSIPWTHKVGNFTGLYSSTIPVFNPDWQTPSFPNIHLHQDIITKCEQFVGPLTVNEKRRLKLVMPARFFPNSTKYLPLDKGIKPYYPENVVNHYFQTRHYLHTLWKAGILYKRETSRSASFCGSPYTWEQDLQHGAFLDGPSRVGKEPFHQQSSRIPSRSPVGPSIQSKYQQSRLGLQSQKGPLARGQQGRSWSLWTRVHPSTRRPFGVEPSVSGHTNNFASRSASCLHQSSVREAAYSHLSTTKRQSSSGHAVELYSIPPSSTKSQSQGPVFSCWWLQFRDSEPCSDYCLSHLVNLLQDWGPCTEHGEYHIRIPRTPARVTGGVFLVDKNPHNTAESRLVVDFSQFSRGSARVSWPKFAVPNLQSLTNLLSSNLSWLSLDVSAAFYHIPLHPAAMPHLLVGSSGLSRYVARLSSDSRILDHQYGTLQNLHDSCSRQLYVSLMLLYKTFGRKLHLYSHPIILGFRKIPMGVGLSPFLLAQFTSAICSVVRRAFPHCLAFSYMDDVVLGAKSVQHLESLYTAVTNFLLSLGIHLNPNKTKRWGYSLNFMGYVIGSWGTLPQEHITQKIKQCFRKLPVNRPIDWKVCQRITGLLGFAAPFTQCGYPALMPLYACIQAKQAFTFSPTYKAFLCKQYMNLYPVARQRPGLCQVFADATPTGWGLAIGHQRMRGTFVAPLPIHTAELLAACFARSRSGAKLIGTDNSVVLSRKYTSFPWLLGCAANWILRGTSFVYVPSALNPADDPSRGRLGLCRPLLRLPFLPTTGRTSLYAVSPSVPSHLPDRVHFASPLHVTWKPP</sequence>
<feature type="chain" id="PRO_0000323278" description="Protein P">
    <location>
        <begin position="1"/>
        <end position="842"/>
    </location>
</feature>
<feature type="domain" description="Reverse transcriptase" evidence="1">
    <location>
        <begin position="356"/>
        <end position="599"/>
    </location>
</feature>
<feature type="region of interest" description="Terminal protein domain (TP)" evidence="1">
    <location>
        <begin position="1"/>
        <end position="177"/>
    </location>
</feature>
<feature type="region of interest" description="Spacer" evidence="1">
    <location>
        <begin position="178"/>
        <end position="345"/>
    </location>
</feature>
<feature type="region of interest" description="Disordered" evidence="2">
    <location>
        <begin position="184"/>
        <end position="238"/>
    </location>
</feature>
<feature type="region of interest" description="Polymerase/reverse transcriptase domain (RT)" evidence="1">
    <location>
        <begin position="346"/>
        <end position="689"/>
    </location>
</feature>
<feature type="compositionally biased region" description="Polar residues" evidence="2">
    <location>
        <begin position="212"/>
        <end position="228"/>
    </location>
</feature>
<feature type="binding site" evidence="1">
    <location>
        <position position="428"/>
    </location>
    <ligand>
        <name>Mg(2+)</name>
        <dbReference type="ChEBI" id="CHEBI:18420"/>
        <note>catalytic</note>
    </ligand>
</feature>
<feature type="binding site" evidence="1">
    <location>
        <position position="550"/>
    </location>
    <ligand>
        <name>Mg(2+)</name>
        <dbReference type="ChEBI" id="CHEBI:18420"/>
        <note>catalytic</note>
    </ligand>
</feature>
<feature type="binding site" evidence="1">
    <location>
        <position position="551"/>
    </location>
    <ligand>
        <name>Mg(2+)</name>
        <dbReference type="ChEBI" id="CHEBI:18420"/>
        <note>catalytic</note>
    </ligand>
</feature>
<feature type="site" description="Priming of reverse-transcription by covalently linking the first nucleotide of the (-)DNA" evidence="1">
    <location>
        <position position="63"/>
    </location>
</feature>
<gene>
    <name evidence="1" type="primary">P</name>
</gene>
<evidence type="ECO:0000255" key="1">
    <source>
        <dbReference type="HAMAP-Rule" id="MF_04073"/>
    </source>
</evidence>
<evidence type="ECO:0000256" key="2">
    <source>
        <dbReference type="SAM" id="MobiDB-lite"/>
    </source>
</evidence>
<organismHost>
    <name type="scientific">Homo sapiens</name>
    <name type="common">Human</name>
    <dbReference type="NCBI Taxonomy" id="9606"/>
</organismHost>
<organismHost>
    <name type="scientific">Pan troglodytes</name>
    <name type="common">Chimpanzee</name>
    <dbReference type="NCBI Taxonomy" id="9598"/>
</organismHost>